<protein>
    <recommendedName>
        <fullName evidence="11">Chitin synthase E</fullName>
        <ecNumber evidence="14">2.4.1.16</ecNumber>
    </recommendedName>
    <alternativeName>
        <fullName evidence="12">Chitin-UDP acetyl-glucosaminyl transferase E</fullName>
    </alternativeName>
    <alternativeName>
        <fullName evidence="11">Class-V chitin synthase E</fullName>
    </alternativeName>
</protein>
<gene>
    <name evidence="11" type="primary">chsE</name>
    <name type="ORF">AFUA_2G13440</name>
</gene>
<comment type="function">
    <text evidence="8 10 13">Polymerizes chitin, a structural polymer of the cell wall and septum, by transferring the sugar moiety of UDP-GlcNAc to the non-reducing end of the growing chitin polymer (Probable). Important for hyphal growth and conidiophore development but not pathogenicity (PubMed:12553940, PubMed:9126623).</text>
</comment>
<comment type="catalytic activity">
    <reaction evidence="14">
        <text>[(1-&gt;4)-N-acetyl-beta-D-glucosaminyl](n) + UDP-N-acetyl-alpha-D-glucosamine = [(1-&gt;4)-N-acetyl-beta-D-glucosaminyl](n+1) + UDP + H(+)</text>
        <dbReference type="Rhea" id="RHEA:16637"/>
        <dbReference type="Rhea" id="RHEA-COMP:9593"/>
        <dbReference type="Rhea" id="RHEA-COMP:9595"/>
        <dbReference type="ChEBI" id="CHEBI:15378"/>
        <dbReference type="ChEBI" id="CHEBI:17029"/>
        <dbReference type="ChEBI" id="CHEBI:57705"/>
        <dbReference type="ChEBI" id="CHEBI:58223"/>
        <dbReference type="EC" id="2.4.1.16"/>
    </reaction>
    <physiologicalReaction direction="left-to-right" evidence="14">
        <dbReference type="Rhea" id="RHEA:16638"/>
    </physiologicalReaction>
</comment>
<comment type="subcellular location">
    <subcellularLocation>
        <location evidence="12">Cell membrane</location>
        <topology evidence="2">Multi-pass membrane protein</topology>
    </subcellularLocation>
    <subcellularLocation>
        <location evidence="1">Cell septum</location>
    </subcellularLocation>
    <subcellularLocation>
        <location evidence="1">Cell tip</location>
    </subcellularLocation>
</comment>
<comment type="induction">
    <text evidence="9">Expressed during hyphal growth.</text>
</comment>
<comment type="domain">
    <text evidence="1">The N-terminal myosin motor-like domain (MMD) does not seem to have motor activity but is indispensable for polarized cell wall synthesis via binding to actin that ensures the proper localization to the hyphal tips and septation sites near actin structures.</text>
</comment>
<comment type="disruption phenotype">
    <text evidence="10">Leads to reduced levels of mycelial chitin, periodic swellings along the length of hyphae, and a block in conidiation (PubMed:9126623). Does not affect virulence in a mouse model of pulmonary aspergillosis (PubMed:9126623).</text>
</comment>
<comment type="similarity">
    <text evidence="12">In the N-terminal section; belongs to the TRAFAC class myosin-kinesin ATPase superfamily. Myosin family.</text>
</comment>
<comment type="similarity">
    <text evidence="12">In the C-terminal section; belongs to the chitin synthase family. Class V subfamily.</text>
</comment>
<proteinExistence type="evidence at transcript level"/>
<name>CHS5_ASPFU</name>
<sequence>MAAPSPAGGAPSHAQSSLPSLPAHLQSDTHLTAHLASRFHVGLPTARLSSQALISLNTYTTSTKGPDGGKEGSAMGEAEDLAKRAFTRLGARGENQAVVFLGESGSGKTTIRSHLLSAFLSFSSTPLSSKLSYAAFLFDTLTTTKSLTTQTASKAGLFLELQYDGSSSVNPTLIGGKIIDHRLERSRITSVPTGERSFHVLYYLLAGTSPAEKAHLGFDKAVHVSTSSGAIGHKRWRYLGHPTQLKVGVNDVEGFQHFKTALRKLEFPRSEIAEICQILATILHIGQLEFASGQATTTHAEESGGYSHEGGETVTIVKNKDVLSIIAAFLGLSVEDLENSFGYRTKTIHRERVTVMLDPKGARQNADELARTIYSLLVAYVIEAVNQRICAAEDSVANTISIVDFPGFAQACATGSTLDQLFNNAATELLYNFCLQSFFDRKADELEREEVSVPATSYFDNTDAVRGLLKHGNGLLSILDDQTRRGRTDNQLLESLRRRFENKNPTIIVEGSKRTSLISQNARSAFTVKHFAGEIDYSVNGLIEENGEFISGDLMRLMKSTKSDFVRELFGQAALQTVTHPKEKTAIMQAQVSSKPLRMPSMARRKTSPSSRLAFDAGDADEVESQAESIAKDSSSGRRKSAMLTSGIQGAAGQFLSSLDIVNKCLSSTNLNPYFIFCLKPNDRRIANQFDSKCVRAQVQMFGIAEISQRLRNADFSVFLPFAEFLGLAEIGNIVVGSDKEKAEVVLDEKRWPGNEARVGSTGVFLSERCWADLAKVGERVVPVYAADMSDEGGDGLLHPRSTGYGDSKVRLLNPADQSPGAFIYGDEAKQGYFGSRDLDGRSDAGNSAFNSGDMFRNHETREQMLEKGNEKKMEEVDDAPISGSRKRWIALVYLLTFYIPDFAIKLFGRIKRKDVRMAWREKFAINLIIWFSCGVAIFFIVAFPGLVCPTQHVYSAAELSSHNGKDGHSSFIAIRGVVFDLDKFMPGHYPHIVPESALKKYAGVDATGLFPVQVSALCQGKSGSVDPMVLLDYRPTNISGSATTISGTDTNSVYHDFRHFTNDSRPDWFYEQMVMLKANYLKGYVGYTPKYLNTLGKKSQSIGSINGKVYDLTSYIAGGRLTKAPPGETVPSDVDTDFMDNSVVSLFQSLPGQDLSKHWENLKIDPALRRRMQLCLDNLFFVGHVDTRNSAQCEFARYFILAISVLICSIIVFKFLAALQFGRKNVPENLDKFIICQVPAYTEDEESLRRAIDSMARMRYDDKRKLLVVICDGMIIGQGNDRPTPRIVLDILGVPESVDPEPLSFESLGEGQKQHNMGKVYSGLYEVQGHIVPFLVIVKVGKPSEVSRPGNRGKRDSQMVLMRFLNRVHYNLPMSPMELEMHHQIRNVIGVNPTFYEFILQVDADTVVAPDSATRMVAAFLNDTRLIGVCGETALTNAKNSAVTMIQVYEYYISHNLTKAFESLFGSVTCLPGCFTMYRIRSAETAKPLFVSKEVVDAYAEIRVDTLHMKNLLHLGEDRYLTTLLLKHHSKYKTKYISSAKAWTIAPESWTVFLSQRRRWINSTVHNLIELIPMQQLCGFCCFSMRFVVFVDLLSTVIQPVTLAYIIYLIYWLVKDTSTIPYTSLILLAAIYGLQALIFIIRRKWEMVGWMIVYLLALPVFSLALPLYSFWHMDDFTWGNTRIITGEKGRKVVISDEGKFDPASIPKKKWEEYQTELWEAQTSRDDRSEVSGISYGTKSYHPAQSEYGFPGSRPMSQLDLPRFGSRMSLAPSEMMSRHADMEMENLSHLPSDDAILAEIREILRTADLMSVTKKSIKLELERRFGVNLDLKRPYINSATEAVLAGAL</sequence>
<feature type="chain" id="PRO_0000460852" description="Chitin synthase E">
    <location>
        <begin position="1"/>
        <end position="1848"/>
    </location>
</feature>
<feature type="transmembrane region" description="Helical" evidence="2">
    <location>
        <begin position="889"/>
        <end position="909"/>
    </location>
</feature>
<feature type="transmembrane region" description="Helical" evidence="2">
    <location>
        <begin position="928"/>
        <end position="948"/>
    </location>
</feature>
<feature type="transmembrane region" description="Helical" evidence="2">
    <location>
        <begin position="1200"/>
        <end position="1220"/>
    </location>
</feature>
<feature type="transmembrane region" description="Helical" evidence="2">
    <location>
        <begin position="1595"/>
        <end position="1615"/>
    </location>
</feature>
<feature type="transmembrane region" description="Helical" evidence="2">
    <location>
        <begin position="1621"/>
        <end position="1641"/>
    </location>
</feature>
<feature type="transmembrane region" description="Helical" evidence="2">
    <location>
        <begin position="1648"/>
        <end position="1668"/>
    </location>
</feature>
<feature type="domain" description="Myosin motor" evidence="5">
    <location>
        <begin position="1"/>
        <end position="779"/>
    </location>
</feature>
<feature type="domain" description="Cytochrome b5 heme-binding" evidence="3">
    <location>
        <begin position="952"/>
        <end position="1040"/>
    </location>
</feature>
<feature type="domain" description="DEK-C" evidence="6">
    <location>
        <begin position="1790"/>
        <end position="1845"/>
    </location>
</feature>
<feature type="region of interest" description="Disordered" evidence="7">
    <location>
        <begin position="1"/>
        <end position="22"/>
    </location>
</feature>
<feature type="region of interest" description="Disordered" evidence="7">
    <location>
        <begin position="593"/>
        <end position="621"/>
    </location>
</feature>
<feature type="region of interest" description="Actin-binding" evidence="5">
    <location>
        <begin position="659"/>
        <end position="683"/>
    </location>
</feature>
<feature type="compositionally biased region" description="Low complexity" evidence="7">
    <location>
        <begin position="1"/>
        <end position="17"/>
    </location>
</feature>
<feature type="binding site" evidence="5">
    <location>
        <begin position="102"/>
        <end position="109"/>
    </location>
    <ligand>
        <name>ATP</name>
        <dbReference type="ChEBI" id="CHEBI:30616"/>
    </ligand>
</feature>
<feature type="glycosylation site" description="N-linked (GlcNAc...) asparagine" evidence="4">
    <location>
        <position position="1038"/>
    </location>
</feature>
<feature type="glycosylation site" description="N-linked (GlcNAc...) asparagine" evidence="4">
    <location>
        <position position="1063"/>
    </location>
</feature>
<feature type="glycosylation site" description="N-linked (GlcNAc...) asparagine" evidence="4">
    <location>
        <position position="1423"/>
    </location>
</feature>
<feature type="glycosylation site" description="N-linked (GlcNAc...) asparagine" evidence="4">
    <location>
        <position position="1457"/>
    </location>
</feature>
<feature type="glycosylation site" description="N-linked (GlcNAc...) asparagine" evidence="4">
    <location>
        <position position="1563"/>
    </location>
</feature>
<feature type="glycosylation site" description="N-linked (GlcNAc...) asparagine" evidence="4">
    <location>
        <position position="1786"/>
    </location>
</feature>
<reference key="1">
    <citation type="journal article" date="2005" name="Nature">
        <title>Genomic sequence of the pathogenic and allergenic filamentous fungus Aspergillus fumigatus.</title>
        <authorList>
            <person name="Nierman W.C."/>
            <person name="Pain A."/>
            <person name="Anderson M.J."/>
            <person name="Wortman J.R."/>
            <person name="Kim H.S."/>
            <person name="Arroyo J."/>
            <person name="Berriman M."/>
            <person name="Abe K."/>
            <person name="Archer D.B."/>
            <person name="Bermejo C."/>
            <person name="Bennett J.W."/>
            <person name="Bowyer P."/>
            <person name="Chen D."/>
            <person name="Collins M."/>
            <person name="Coulsen R."/>
            <person name="Davies R."/>
            <person name="Dyer P.S."/>
            <person name="Farman M.L."/>
            <person name="Fedorova N."/>
            <person name="Fedorova N.D."/>
            <person name="Feldblyum T.V."/>
            <person name="Fischer R."/>
            <person name="Fosker N."/>
            <person name="Fraser A."/>
            <person name="Garcia J.L."/>
            <person name="Garcia M.J."/>
            <person name="Goble A."/>
            <person name="Goldman G.H."/>
            <person name="Gomi K."/>
            <person name="Griffith-Jones S."/>
            <person name="Gwilliam R."/>
            <person name="Haas B.J."/>
            <person name="Haas H."/>
            <person name="Harris D.E."/>
            <person name="Horiuchi H."/>
            <person name="Huang J."/>
            <person name="Humphray S."/>
            <person name="Jimenez J."/>
            <person name="Keller N."/>
            <person name="Khouri H."/>
            <person name="Kitamoto K."/>
            <person name="Kobayashi T."/>
            <person name="Konzack S."/>
            <person name="Kulkarni R."/>
            <person name="Kumagai T."/>
            <person name="Lafton A."/>
            <person name="Latge J.-P."/>
            <person name="Li W."/>
            <person name="Lord A."/>
            <person name="Lu C."/>
            <person name="Majoros W.H."/>
            <person name="May G.S."/>
            <person name="Miller B.L."/>
            <person name="Mohamoud Y."/>
            <person name="Molina M."/>
            <person name="Monod M."/>
            <person name="Mouyna I."/>
            <person name="Mulligan S."/>
            <person name="Murphy L.D."/>
            <person name="O'Neil S."/>
            <person name="Paulsen I."/>
            <person name="Penalva M.A."/>
            <person name="Pertea M."/>
            <person name="Price C."/>
            <person name="Pritchard B.L."/>
            <person name="Quail M.A."/>
            <person name="Rabbinowitsch E."/>
            <person name="Rawlins N."/>
            <person name="Rajandream M.A."/>
            <person name="Reichard U."/>
            <person name="Renauld H."/>
            <person name="Robson G.D."/>
            <person name="Rodriguez de Cordoba S."/>
            <person name="Rodriguez-Pena J.M."/>
            <person name="Ronning C.M."/>
            <person name="Rutter S."/>
            <person name="Salzberg S.L."/>
            <person name="Sanchez M."/>
            <person name="Sanchez-Ferrero J.C."/>
            <person name="Saunders D."/>
            <person name="Seeger K."/>
            <person name="Squares R."/>
            <person name="Squares S."/>
            <person name="Takeuchi M."/>
            <person name="Tekaia F."/>
            <person name="Turner G."/>
            <person name="Vazquez de Aldana C.R."/>
            <person name="Weidman J."/>
            <person name="White O."/>
            <person name="Woodward J.R."/>
            <person name="Yu J.-H."/>
            <person name="Fraser C.M."/>
            <person name="Galagan J.E."/>
            <person name="Asai K."/>
            <person name="Machida M."/>
            <person name="Hall N."/>
            <person name="Barrell B.G."/>
            <person name="Denning D.W."/>
        </authorList>
    </citation>
    <scope>NUCLEOTIDE SEQUENCE [LARGE SCALE GENOMIC DNA]</scope>
    <source>
        <strain>ATCC MYA-4609 / CBS 101355 / FGSC A1100 / Af293</strain>
    </source>
</reference>
<reference key="2">
    <citation type="journal article" date="1995" name="Mol. Gen. Genet.">
        <title>A multigene family related to chitin synthase genes of yeast in the opportunistic pathogen Aspergillus fumigatus.</title>
        <authorList>
            <person name="Mellado E."/>
            <person name="Aufauvre-Brown A."/>
            <person name="Specht C.A."/>
            <person name="Robbins P.W."/>
            <person name="Holden D.W."/>
        </authorList>
    </citation>
    <scope>IDENTIFICATION</scope>
    <scope>INDUCTION</scope>
</reference>
<reference key="3">
    <citation type="journal article" date="1997" name="Fungal Genet. Biol.">
        <title>Aspergillus fumigatus chsE: a gene related to CHS3 of Saccharomyces cerevisiae and important for hyphal growth and conidiophore development but not pathogenicity.</title>
        <authorList>
            <person name="Aufauvre-Brown A."/>
            <person name="Mellado E."/>
            <person name="Gow N.A."/>
            <person name="Holden D.W."/>
        </authorList>
    </citation>
    <scope>FUNCTION</scope>
    <scope>DISRUPTION PHENOTYPE</scope>
</reference>
<reference key="4">
    <citation type="journal article" date="2003" name="Fungal Genet. Biol.">
        <title>Cell wall biogenesis in a double chitin synthase mutant (chsG-/chsE-) of Aspergillus fumigatus.</title>
        <authorList>
            <person name="Mellado E."/>
            <person name="Dubreucq G."/>
            <person name="Mol P."/>
            <person name="Sarfati J."/>
            <person name="Paris S."/>
            <person name="Diaquin M."/>
            <person name="Holden D.W."/>
            <person name="Rodriguez-Tudela J.L."/>
            <person name="Latge J.P."/>
        </authorList>
    </citation>
    <scope>FUNCTION</scope>
</reference>
<keyword id="KW-0009">Actin-binding</keyword>
<keyword id="KW-0067">ATP-binding</keyword>
<keyword id="KW-1003">Cell membrane</keyword>
<keyword id="KW-0325">Glycoprotein</keyword>
<keyword id="KW-0328">Glycosyltransferase</keyword>
<keyword id="KW-0472">Membrane</keyword>
<keyword id="KW-0505">Motor protein</keyword>
<keyword id="KW-0518">Myosin</keyword>
<keyword id="KW-0547">Nucleotide-binding</keyword>
<keyword id="KW-1185">Reference proteome</keyword>
<keyword id="KW-0808">Transferase</keyword>
<keyword id="KW-0812">Transmembrane</keyword>
<keyword id="KW-1133">Transmembrane helix</keyword>
<accession>Q4X0H6</accession>
<organism>
    <name type="scientific">Aspergillus fumigatus (strain ATCC MYA-4609 / CBS 101355 / FGSC A1100 / Af293)</name>
    <name type="common">Neosartorya fumigata</name>
    <dbReference type="NCBI Taxonomy" id="330879"/>
    <lineage>
        <taxon>Eukaryota</taxon>
        <taxon>Fungi</taxon>
        <taxon>Dikarya</taxon>
        <taxon>Ascomycota</taxon>
        <taxon>Pezizomycotina</taxon>
        <taxon>Eurotiomycetes</taxon>
        <taxon>Eurotiomycetidae</taxon>
        <taxon>Eurotiales</taxon>
        <taxon>Aspergillaceae</taxon>
        <taxon>Aspergillus</taxon>
        <taxon>Aspergillus subgen. Fumigati</taxon>
    </lineage>
</organism>
<dbReference type="EC" id="2.4.1.16" evidence="14"/>
<dbReference type="EMBL" id="AAHF01000001">
    <property type="protein sequence ID" value="EAL93639.1"/>
    <property type="molecule type" value="Genomic_DNA"/>
</dbReference>
<dbReference type="RefSeq" id="XP_755677.1">
    <property type="nucleotide sequence ID" value="XM_750584.1"/>
</dbReference>
<dbReference type="SMR" id="Q4X0H6"/>
<dbReference type="STRING" id="330879.Q4X0H6"/>
<dbReference type="EnsemblFungi" id="EAL93639">
    <property type="protein sequence ID" value="EAL93639"/>
    <property type="gene ID" value="AFUA_2G13440"/>
</dbReference>
<dbReference type="GeneID" id="3513767"/>
<dbReference type="KEGG" id="afm:AFUA_2G13440"/>
<dbReference type="VEuPathDB" id="FungiDB:Afu2g13440"/>
<dbReference type="eggNOG" id="KOG2571">
    <property type="taxonomic scope" value="Eukaryota"/>
</dbReference>
<dbReference type="eggNOG" id="KOG4229">
    <property type="taxonomic scope" value="Eukaryota"/>
</dbReference>
<dbReference type="HOGENOM" id="CLU_000192_0_2_1"/>
<dbReference type="InParanoid" id="Q4X0H6"/>
<dbReference type="OMA" id="LEMHHQI"/>
<dbReference type="OrthoDB" id="370884at2759"/>
<dbReference type="PHI-base" id="PHI:3048"/>
<dbReference type="Proteomes" id="UP000002530">
    <property type="component" value="Chromosome 2"/>
</dbReference>
<dbReference type="GO" id="GO:0071944">
    <property type="term" value="C:cell periphery"/>
    <property type="evidence" value="ECO:0000318"/>
    <property type="project" value="GO_Central"/>
</dbReference>
<dbReference type="GO" id="GO:0030428">
    <property type="term" value="C:cell septum"/>
    <property type="evidence" value="ECO:0000318"/>
    <property type="project" value="GO_Central"/>
</dbReference>
<dbReference type="GO" id="GO:0051286">
    <property type="term" value="C:cell tip"/>
    <property type="evidence" value="ECO:0007669"/>
    <property type="project" value="UniProtKB-SubCell"/>
</dbReference>
<dbReference type="GO" id="GO:0016459">
    <property type="term" value="C:myosin complex"/>
    <property type="evidence" value="ECO:0007669"/>
    <property type="project" value="UniProtKB-KW"/>
</dbReference>
<dbReference type="GO" id="GO:0005886">
    <property type="term" value="C:plasma membrane"/>
    <property type="evidence" value="ECO:0007669"/>
    <property type="project" value="UniProtKB-SubCell"/>
</dbReference>
<dbReference type="GO" id="GO:0003779">
    <property type="term" value="F:actin binding"/>
    <property type="evidence" value="ECO:0007669"/>
    <property type="project" value="UniProtKB-KW"/>
</dbReference>
<dbReference type="GO" id="GO:0005524">
    <property type="term" value="F:ATP binding"/>
    <property type="evidence" value="ECO:0007669"/>
    <property type="project" value="UniProtKB-KW"/>
</dbReference>
<dbReference type="GO" id="GO:0004100">
    <property type="term" value="F:chitin synthase activity"/>
    <property type="evidence" value="ECO:0000318"/>
    <property type="project" value="GO_Central"/>
</dbReference>
<dbReference type="GO" id="GO:0003774">
    <property type="term" value="F:cytoskeletal motor activity"/>
    <property type="evidence" value="ECO:0007669"/>
    <property type="project" value="InterPro"/>
</dbReference>
<dbReference type="GO" id="GO:0043936">
    <property type="term" value="P:asexual sporulation resulting in formation of a cellular spore"/>
    <property type="evidence" value="ECO:0000315"/>
    <property type="project" value="AspGD"/>
</dbReference>
<dbReference type="GO" id="GO:0006031">
    <property type="term" value="P:chitin biosynthetic process"/>
    <property type="evidence" value="ECO:0000315"/>
    <property type="project" value="AspGD"/>
</dbReference>
<dbReference type="GO" id="GO:0031505">
    <property type="term" value="P:fungal-type cell wall organization"/>
    <property type="evidence" value="ECO:0000315"/>
    <property type="project" value="AspGD"/>
</dbReference>
<dbReference type="GO" id="GO:0030448">
    <property type="term" value="P:hyphal growth"/>
    <property type="evidence" value="ECO:0000315"/>
    <property type="project" value="AspGD"/>
</dbReference>
<dbReference type="CDD" id="cd14879">
    <property type="entry name" value="MYSc_Myo17"/>
    <property type="match status" value="1"/>
</dbReference>
<dbReference type="FunFam" id="1.10.10.60:FF:000337">
    <property type="entry name" value="Chitin synthase 8"/>
    <property type="match status" value="1"/>
</dbReference>
<dbReference type="FunFam" id="1.10.10.820:FF:000012">
    <property type="entry name" value="Chitin synthase ChsE"/>
    <property type="match status" value="1"/>
</dbReference>
<dbReference type="FunFam" id="1.20.58.530:FF:000017">
    <property type="entry name" value="Chitin synthase ChsE"/>
    <property type="match status" value="1"/>
</dbReference>
<dbReference type="FunFam" id="3.10.120.10:FF:000019">
    <property type="entry name" value="Chitin synthase ChsE"/>
    <property type="match status" value="1"/>
</dbReference>
<dbReference type="FunFam" id="3.40.850.10:FF:000055">
    <property type="entry name" value="Chitin synthase ChsE"/>
    <property type="match status" value="1"/>
</dbReference>
<dbReference type="Gene3D" id="1.10.10.820">
    <property type="match status" value="1"/>
</dbReference>
<dbReference type="Gene3D" id="1.20.58.530">
    <property type="match status" value="1"/>
</dbReference>
<dbReference type="Gene3D" id="3.10.120.10">
    <property type="entry name" value="Cytochrome b5-like heme/steroid binding domain"/>
    <property type="match status" value="1"/>
</dbReference>
<dbReference type="Gene3D" id="1.10.10.60">
    <property type="entry name" value="Homeodomain-like"/>
    <property type="match status" value="1"/>
</dbReference>
<dbReference type="Gene3D" id="3.40.850.10">
    <property type="entry name" value="Kinesin motor domain"/>
    <property type="match status" value="1"/>
</dbReference>
<dbReference type="Gene3D" id="1.20.120.720">
    <property type="entry name" value="Myosin VI head, motor domain, U50 subdomain"/>
    <property type="match status" value="1"/>
</dbReference>
<dbReference type="Gene3D" id="3.90.550.10">
    <property type="entry name" value="Spore Coat Polysaccharide Biosynthesis Protein SpsA, Chain A"/>
    <property type="match status" value="1"/>
</dbReference>
<dbReference type="InterPro" id="IPR004835">
    <property type="entry name" value="Chitin_synth"/>
</dbReference>
<dbReference type="InterPro" id="IPR001199">
    <property type="entry name" value="Cyt_B5-like_heme/steroid-bd"/>
</dbReference>
<dbReference type="InterPro" id="IPR036400">
    <property type="entry name" value="Cyt_B5-like_heme/steroid_sf"/>
</dbReference>
<dbReference type="InterPro" id="IPR014876">
    <property type="entry name" value="DEK_C"/>
</dbReference>
<dbReference type="InterPro" id="IPR036961">
    <property type="entry name" value="Kinesin_motor_dom_sf"/>
</dbReference>
<dbReference type="InterPro" id="IPR001609">
    <property type="entry name" value="Myosin_head_motor_dom-like"/>
</dbReference>
<dbReference type="InterPro" id="IPR036037">
    <property type="entry name" value="MYSc_Myo17"/>
</dbReference>
<dbReference type="InterPro" id="IPR029044">
    <property type="entry name" value="Nucleotide-diphossugar_trans"/>
</dbReference>
<dbReference type="InterPro" id="IPR027417">
    <property type="entry name" value="P-loop_NTPase"/>
</dbReference>
<dbReference type="PANTHER" id="PTHR22914">
    <property type="entry name" value="CHITIN SYNTHASE"/>
    <property type="match status" value="1"/>
</dbReference>
<dbReference type="PANTHER" id="PTHR22914:SF45">
    <property type="entry name" value="CHITIN SYNTHASE"/>
    <property type="match status" value="1"/>
</dbReference>
<dbReference type="Pfam" id="PF03142">
    <property type="entry name" value="Chitin_synth_2"/>
    <property type="match status" value="1"/>
</dbReference>
<dbReference type="Pfam" id="PF00173">
    <property type="entry name" value="Cyt-b5"/>
    <property type="match status" value="1"/>
</dbReference>
<dbReference type="Pfam" id="PF08766">
    <property type="entry name" value="DEK_C"/>
    <property type="match status" value="1"/>
</dbReference>
<dbReference type="Pfam" id="PF00063">
    <property type="entry name" value="Myosin_head"/>
    <property type="match status" value="1"/>
</dbReference>
<dbReference type="SMART" id="SM01117">
    <property type="entry name" value="Cyt-b5"/>
    <property type="match status" value="2"/>
</dbReference>
<dbReference type="SMART" id="SM00242">
    <property type="entry name" value="MYSc"/>
    <property type="match status" value="1"/>
</dbReference>
<dbReference type="SUPFAM" id="SSF55856">
    <property type="entry name" value="Cytochrome b5-like heme/steroid binding domain"/>
    <property type="match status" value="1"/>
</dbReference>
<dbReference type="SUPFAM" id="SSF109715">
    <property type="entry name" value="DEK C-terminal domain"/>
    <property type="match status" value="1"/>
</dbReference>
<dbReference type="SUPFAM" id="SSF53448">
    <property type="entry name" value="Nucleotide-diphospho-sugar transferases"/>
    <property type="match status" value="1"/>
</dbReference>
<dbReference type="SUPFAM" id="SSF52540">
    <property type="entry name" value="P-loop containing nucleoside triphosphate hydrolases"/>
    <property type="match status" value="1"/>
</dbReference>
<dbReference type="PROSITE" id="PS50255">
    <property type="entry name" value="CYTOCHROME_B5_2"/>
    <property type="match status" value="1"/>
</dbReference>
<dbReference type="PROSITE" id="PS51998">
    <property type="entry name" value="DEK_C"/>
    <property type="match status" value="1"/>
</dbReference>
<dbReference type="PROSITE" id="PS51456">
    <property type="entry name" value="MYOSIN_MOTOR"/>
    <property type="match status" value="1"/>
</dbReference>
<evidence type="ECO:0000250" key="1">
    <source>
        <dbReference type="UniProtKB" id="G5EB74"/>
    </source>
</evidence>
<evidence type="ECO:0000255" key="2"/>
<evidence type="ECO:0000255" key="3">
    <source>
        <dbReference type="PROSITE-ProRule" id="PRU00279"/>
    </source>
</evidence>
<evidence type="ECO:0000255" key="4">
    <source>
        <dbReference type="PROSITE-ProRule" id="PRU00498"/>
    </source>
</evidence>
<evidence type="ECO:0000255" key="5">
    <source>
        <dbReference type="PROSITE-ProRule" id="PRU00782"/>
    </source>
</evidence>
<evidence type="ECO:0000255" key="6">
    <source>
        <dbReference type="PROSITE-ProRule" id="PRU01342"/>
    </source>
</evidence>
<evidence type="ECO:0000256" key="7">
    <source>
        <dbReference type="SAM" id="MobiDB-lite"/>
    </source>
</evidence>
<evidence type="ECO:0000269" key="8">
    <source>
    </source>
</evidence>
<evidence type="ECO:0000269" key="9">
    <source>
    </source>
</evidence>
<evidence type="ECO:0000269" key="10">
    <source>
    </source>
</evidence>
<evidence type="ECO:0000303" key="11">
    <source>
    </source>
</evidence>
<evidence type="ECO:0000305" key="12"/>
<evidence type="ECO:0000305" key="13">
    <source>
    </source>
</evidence>
<evidence type="ECO:0000305" key="14">
    <source>
    </source>
</evidence>